<accession>B5YJ67</accession>
<evidence type="ECO:0000255" key="1">
    <source>
        <dbReference type="HAMAP-Rule" id="MF_01363"/>
    </source>
</evidence>
<evidence type="ECO:0000305" key="2"/>
<organism>
    <name type="scientific">Thermodesulfovibrio yellowstonii (strain ATCC 51303 / DSM 11347 / YP87)</name>
    <dbReference type="NCBI Taxonomy" id="289376"/>
    <lineage>
        <taxon>Bacteria</taxon>
        <taxon>Pseudomonadati</taxon>
        <taxon>Nitrospirota</taxon>
        <taxon>Thermodesulfovibrionia</taxon>
        <taxon>Thermodesulfovibrionales</taxon>
        <taxon>Thermodesulfovibrionaceae</taxon>
        <taxon>Thermodesulfovibrio</taxon>
    </lineage>
</organism>
<reference key="1">
    <citation type="submission" date="2008-08" db="EMBL/GenBank/DDBJ databases">
        <title>The complete genome sequence of Thermodesulfovibrio yellowstonii strain ATCC 51303 / DSM 11347 / YP87.</title>
        <authorList>
            <person name="Dodson R.J."/>
            <person name="Durkin A.S."/>
            <person name="Wu M."/>
            <person name="Eisen J."/>
            <person name="Sutton G."/>
        </authorList>
    </citation>
    <scope>NUCLEOTIDE SEQUENCE [LARGE SCALE GENOMIC DNA]</scope>
    <source>
        <strain>ATCC 51303 / DSM 11347 / YP87</strain>
    </source>
</reference>
<gene>
    <name evidence="1" type="primary">rplU</name>
    <name type="ordered locus">THEYE_A0435</name>
</gene>
<dbReference type="EMBL" id="CP001147">
    <property type="protein sequence ID" value="ACI20366.1"/>
    <property type="molecule type" value="Genomic_DNA"/>
</dbReference>
<dbReference type="RefSeq" id="WP_012545103.1">
    <property type="nucleotide sequence ID" value="NC_011296.1"/>
</dbReference>
<dbReference type="RefSeq" id="YP_002248282.1">
    <property type="nucleotide sequence ID" value="NC_011296.1"/>
</dbReference>
<dbReference type="SMR" id="B5YJ67"/>
<dbReference type="FunCoup" id="B5YJ67">
    <property type="interactions" value="509"/>
</dbReference>
<dbReference type="STRING" id="289376.THEYE_A0435"/>
<dbReference type="EnsemblBacteria" id="ACI20366">
    <property type="protein sequence ID" value="ACI20366"/>
    <property type="gene ID" value="THEYE_A0435"/>
</dbReference>
<dbReference type="KEGG" id="tye:THEYE_A0435"/>
<dbReference type="PATRIC" id="fig|289376.4.peg.432"/>
<dbReference type="eggNOG" id="COG0261">
    <property type="taxonomic scope" value="Bacteria"/>
</dbReference>
<dbReference type="HOGENOM" id="CLU_061463_3_2_0"/>
<dbReference type="InParanoid" id="B5YJ67"/>
<dbReference type="OrthoDB" id="9813334at2"/>
<dbReference type="Proteomes" id="UP000000718">
    <property type="component" value="Chromosome"/>
</dbReference>
<dbReference type="GO" id="GO:0005737">
    <property type="term" value="C:cytoplasm"/>
    <property type="evidence" value="ECO:0007669"/>
    <property type="project" value="UniProtKB-ARBA"/>
</dbReference>
<dbReference type="GO" id="GO:1990904">
    <property type="term" value="C:ribonucleoprotein complex"/>
    <property type="evidence" value="ECO:0007669"/>
    <property type="project" value="UniProtKB-KW"/>
</dbReference>
<dbReference type="GO" id="GO:0005840">
    <property type="term" value="C:ribosome"/>
    <property type="evidence" value="ECO:0007669"/>
    <property type="project" value="UniProtKB-KW"/>
</dbReference>
<dbReference type="GO" id="GO:0019843">
    <property type="term" value="F:rRNA binding"/>
    <property type="evidence" value="ECO:0007669"/>
    <property type="project" value="UniProtKB-UniRule"/>
</dbReference>
<dbReference type="GO" id="GO:0003735">
    <property type="term" value="F:structural constituent of ribosome"/>
    <property type="evidence" value="ECO:0000318"/>
    <property type="project" value="GO_Central"/>
</dbReference>
<dbReference type="GO" id="GO:0006412">
    <property type="term" value="P:translation"/>
    <property type="evidence" value="ECO:0007669"/>
    <property type="project" value="UniProtKB-UniRule"/>
</dbReference>
<dbReference type="HAMAP" id="MF_01363">
    <property type="entry name" value="Ribosomal_bL21"/>
    <property type="match status" value="1"/>
</dbReference>
<dbReference type="InterPro" id="IPR028909">
    <property type="entry name" value="bL21-like"/>
</dbReference>
<dbReference type="InterPro" id="IPR036164">
    <property type="entry name" value="bL21-like_sf"/>
</dbReference>
<dbReference type="InterPro" id="IPR001787">
    <property type="entry name" value="Ribosomal_bL21"/>
</dbReference>
<dbReference type="NCBIfam" id="TIGR00061">
    <property type="entry name" value="L21"/>
    <property type="match status" value="1"/>
</dbReference>
<dbReference type="PANTHER" id="PTHR21349">
    <property type="entry name" value="50S RIBOSOMAL PROTEIN L21"/>
    <property type="match status" value="1"/>
</dbReference>
<dbReference type="PANTHER" id="PTHR21349:SF0">
    <property type="entry name" value="LARGE RIBOSOMAL SUBUNIT PROTEIN BL21M"/>
    <property type="match status" value="1"/>
</dbReference>
<dbReference type="Pfam" id="PF00829">
    <property type="entry name" value="Ribosomal_L21p"/>
    <property type="match status" value="1"/>
</dbReference>
<dbReference type="SUPFAM" id="SSF141091">
    <property type="entry name" value="L21p-like"/>
    <property type="match status" value="1"/>
</dbReference>
<sequence length="104" mass="11763">MYAIIETGGKQFRVKSGDIVKIEKLNIEPGQEVIFDKVLLFKGNEGLKIGNPYIEGVKVKAEVIDEKKDKKVLVYSPPSKKAIHKLKGHRQWYTKIKIKEIVGG</sequence>
<comment type="function">
    <text evidence="1">This protein binds to 23S rRNA in the presence of protein L20.</text>
</comment>
<comment type="subunit">
    <text evidence="1">Part of the 50S ribosomal subunit. Contacts protein L20.</text>
</comment>
<comment type="similarity">
    <text evidence="1">Belongs to the bacterial ribosomal protein bL21 family.</text>
</comment>
<feature type="chain" id="PRO_1000143865" description="Large ribosomal subunit protein bL21">
    <location>
        <begin position="1"/>
        <end position="104"/>
    </location>
</feature>
<protein>
    <recommendedName>
        <fullName evidence="1">Large ribosomal subunit protein bL21</fullName>
    </recommendedName>
    <alternativeName>
        <fullName evidence="2">50S ribosomal protein L21</fullName>
    </alternativeName>
</protein>
<keyword id="KW-1185">Reference proteome</keyword>
<keyword id="KW-0687">Ribonucleoprotein</keyword>
<keyword id="KW-0689">Ribosomal protein</keyword>
<keyword id="KW-0694">RNA-binding</keyword>
<keyword id="KW-0699">rRNA-binding</keyword>
<proteinExistence type="inferred from homology"/>
<name>RL21_THEYD</name>